<proteinExistence type="inferred from homology"/>
<keyword id="KW-0997">Cell inner membrane</keyword>
<keyword id="KW-1003">Cell membrane</keyword>
<keyword id="KW-0472">Membrane</keyword>
<keyword id="KW-1185">Reference proteome</keyword>
<keyword id="KW-0812">Transmembrane</keyword>
<keyword id="KW-1133">Transmembrane helix</keyword>
<sequence length="401" mass="44547">MSVELLPHSTEPHANGADKSVSAAARVTQSLKKQQVFDAEQVKLQSATDELKSAQMFAPQTPITAIDDVVDEALAAHPQALDVESIRPKLHQSRRWSWLARLSLMALLLLTLVQTVLGLRDAWLESPWLFSFYGAVLGIVGSWAIVGVIGEYRKLKRLKQVADTQETGARLALSMQMGEADGFIDNIVRHYPDSQGLQRLRHSLKDEHNDAEKVLLFEDLVLTERDELAKKIVRRYAAESAVLLAASPLAVLDMAIILWRNQRMLRDVAACYGIELGYWSRIKLIRSIVINIIYAGTSELVTDLGTQLLSVEMTGKLSARLAQGLGGGLLTARLGYQAMALCRPIRFKDEQRPKLTKVHQELLMELKQFAGNLLTKDGRDALKTQLEGTEVNTSSKEKSLS</sequence>
<reference key="1">
    <citation type="journal article" date="2002" name="Nat. Biotechnol.">
        <title>Genome sequence of the dissimilatory metal ion-reducing bacterium Shewanella oneidensis.</title>
        <authorList>
            <person name="Heidelberg J.F."/>
            <person name="Paulsen I.T."/>
            <person name="Nelson K.E."/>
            <person name="Gaidos E.J."/>
            <person name="Nelson W.C."/>
            <person name="Read T.D."/>
            <person name="Eisen J.A."/>
            <person name="Seshadri R."/>
            <person name="Ward N.L."/>
            <person name="Methe B.A."/>
            <person name="Clayton R.A."/>
            <person name="Meyer T."/>
            <person name="Tsapin A."/>
            <person name="Scott J."/>
            <person name="Beanan M.J."/>
            <person name="Brinkac L.M."/>
            <person name="Daugherty S.C."/>
            <person name="DeBoy R.T."/>
            <person name="Dodson R.J."/>
            <person name="Durkin A.S."/>
            <person name="Haft D.H."/>
            <person name="Kolonay J.F."/>
            <person name="Madupu R."/>
            <person name="Peterson J.D."/>
            <person name="Umayam L.A."/>
            <person name="White O."/>
            <person name="Wolf A.M."/>
            <person name="Vamathevan J.J."/>
            <person name="Weidman J.F."/>
            <person name="Impraim M."/>
            <person name="Lee K."/>
            <person name="Berry K.J."/>
            <person name="Lee C."/>
            <person name="Mueller J."/>
            <person name="Khouri H.M."/>
            <person name="Gill J."/>
            <person name="Utterback T.R."/>
            <person name="McDonald L.A."/>
            <person name="Feldblyum T.V."/>
            <person name="Smith H.O."/>
            <person name="Venter J.C."/>
            <person name="Nealson K.H."/>
            <person name="Fraser C.M."/>
        </authorList>
    </citation>
    <scope>NUCLEOTIDE SEQUENCE [LARGE SCALE GENOMIC DNA]</scope>
    <source>
        <strain>ATCC 700550 / JCM 31522 / CIP 106686 / LMG 19005 / NCIMB 14063 / MR-1</strain>
    </source>
</reference>
<feature type="chain" id="PRO_0000214185" description="UPF0283 membrane protein SO_1811">
    <location>
        <begin position="1"/>
        <end position="401"/>
    </location>
</feature>
<feature type="transmembrane region" description="Helical" evidence="1">
    <location>
        <begin position="99"/>
        <end position="119"/>
    </location>
</feature>
<feature type="transmembrane region" description="Helical" evidence="1">
    <location>
        <begin position="129"/>
        <end position="149"/>
    </location>
</feature>
<feature type="transmembrane region" description="Helical" evidence="1">
    <location>
        <begin position="239"/>
        <end position="259"/>
    </location>
</feature>
<feature type="region of interest" description="Disordered" evidence="2">
    <location>
        <begin position="1"/>
        <end position="22"/>
    </location>
</feature>
<evidence type="ECO:0000255" key="1">
    <source>
        <dbReference type="HAMAP-Rule" id="MF_01085"/>
    </source>
</evidence>
<evidence type="ECO:0000256" key="2">
    <source>
        <dbReference type="SAM" id="MobiDB-lite"/>
    </source>
</evidence>
<name>Y1811_SHEON</name>
<organism>
    <name type="scientific">Shewanella oneidensis (strain ATCC 700550 / JCM 31522 / CIP 106686 / LMG 19005 / NCIMB 14063 / MR-1)</name>
    <dbReference type="NCBI Taxonomy" id="211586"/>
    <lineage>
        <taxon>Bacteria</taxon>
        <taxon>Pseudomonadati</taxon>
        <taxon>Pseudomonadota</taxon>
        <taxon>Gammaproteobacteria</taxon>
        <taxon>Alteromonadales</taxon>
        <taxon>Shewanellaceae</taxon>
        <taxon>Shewanella</taxon>
    </lineage>
</organism>
<comment type="subcellular location">
    <subcellularLocation>
        <location evidence="1">Cell inner membrane</location>
        <topology evidence="1">Multi-pass membrane protein</topology>
    </subcellularLocation>
</comment>
<comment type="similarity">
    <text evidence="1">Belongs to the UPF0283 family.</text>
</comment>
<dbReference type="EMBL" id="AE014299">
    <property type="protein sequence ID" value="AAN54863.1"/>
    <property type="molecule type" value="Genomic_DNA"/>
</dbReference>
<dbReference type="RefSeq" id="NP_717419.1">
    <property type="nucleotide sequence ID" value="NC_004347.2"/>
</dbReference>
<dbReference type="RefSeq" id="WP_011071932.1">
    <property type="nucleotide sequence ID" value="NC_004347.2"/>
</dbReference>
<dbReference type="STRING" id="211586.SO_1811"/>
<dbReference type="PaxDb" id="211586-SO_1811"/>
<dbReference type="KEGG" id="son:SO_1811"/>
<dbReference type="PATRIC" id="fig|211586.12.peg.1741"/>
<dbReference type="eggNOG" id="COG3768">
    <property type="taxonomic scope" value="Bacteria"/>
</dbReference>
<dbReference type="HOGENOM" id="CLU_057693_0_0_6"/>
<dbReference type="OrthoDB" id="958025at2"/>
<dbReference type="PhylomeDB" id="Q8EG03"/>
<dbReference type="BioCyc" id="SONE211586:G1GMP-1662-MONOMER"/>
<dbReference type="Proteomes" id="UP000008186">
    <property type="component" value="Chromosome"/>
</dbReference>
<dbReference type="GO" id="GO:0005886">
    <property type="term" value="C:plasma membrane"/>
    <property type="evidence" value="ECO:0000318"/>
    <property type="project" value="GO_Central"/>
</dbReference>
<dbReference type="HAMAP" id="MF_01085">
    <property type="entry name" value="UPF0283"/>
    <property type="match status" value="1"/>
</dbReference>
<dbReference type="InterPro" id="IPR021147">
    <property type="entry name" value="DUF697"/>
</dbReference>
<dbReference type="InterPro" id="IPR006507">
    <property type="entry name" value="UPF0283"/>
</dbReference>
<dbReference type="NCBIfam" id="TIGR01620">
    <property type="entry name" value="hyp_HI0043"/>
    <property type="match status" value="1"/>
</dbReference>
<dbReference type="PANTHER" id="PTHR39342">
    <property type="entry name" value="UPF0283 MEMBRANE PROTEIN YCJF"/>
    <property type="match status" value="1"/>
</dbReference>
<dbReference type="PANTHER" id="PTHR39342:SF1">
    <property type="entry name" value="UPF0283 MEMBRANE PROTEIN YCJF"/>
    <property type="match status" value="1"/>
</dbReference>
<dbReference type="Pfam" id="PF05128">
    <property type="entry name" value="DUF697"/>
    <property type="match status" value="1"/>
</dbReference>
<accession>Q8EG03</accession>
<gene>
    <name type="ordered locus">SO_1811</name>
</gene>
<protein>
    <recommendedName>
        <fullName evidence="1">UPF0283 membrane protein SO_1811</fullName>
    </recommendedName>
</protein>